<proteinExistence type="inferred from homology"/>
<sequence length="414" mass="46427">MLSAQQFLKEFNNVESLDESLYEIVSQICEEVKLQGDKALKNYNLQFDQVETEKLELEQSQLKNAYDMLDNETRDALEQSYQRIKVYQENIKVKQESSQQTECYERYHPIERVGIYVPGGKASYPSTVLMTATLAQVAGVNEITVVTPPQNSGICQEVLAACYITGVHHVYQVGGAQSIAALTYGTETIKKVDKIVGPGNQYVAYAKKFVFGQVGIDQIAGPTEIALIIDESADLDAIAYDVFAQAEHDEMACTYVISENEKVLNQLNTIIQEKLQYVERQDIISQSIANHHYLILAQDTEEACLIMNTIAPEHASIQTRAPEMYIDKVKYVGALFLGHFSPEVIGDYVAGPSHVLPTNQTARFTNGLSVNDFMTRHSVIHLSQKTFNEVAESAEHIAHIESLFNHEKSIHVRR</sequence>
<gene>
    <name evidence="1" type="primary">hisD</name>
    <name type="ordered locus">SERP2305</name>
</gene>
<reference key="1">
    <citation type="journal article" date="2005" name="J. Bacteriol.">
        <title>Insights on evolution of virulence and resistance from the complete genome analysis of an early methicillin-resistant Staphylococcus aureus strain and a biofilm-producing methicillin-resistant Staphylococcus epidermidis strain.</title>
        <authorList>
            <person name="Gill S.R."/>
            <person name="Fouts D.E."/>
            <person name="Archer G.L."/>
            <person name="Mongodin E.F."/>
            <person name="DeBoy R.T."/>
            <person name="Ravel J."/>
            <person name="Paulsen I.T."/>
            <person name="Kolonay J.F."/>
            <person name="Brinkac L.M."/>
            <person name="Beanan M.J."/>
            <person name="Dodson R.J."/>
            <person name="Daugherty S.C."/>
            <person name="Madupu R."/>
            <person name="Angiuoli S.V."/>
            <person name="Durkin A.S."/>
            <person name="Haft D.H."/>
            <person name="Vamathevan J.J."/>
            <person name="Khouri H."/>
            <person name="Utterback T.R."/>
            <person name="Lee C."/>
            <person name="Dimitrov G."/>
            <person name="Jiang L."/>
            <person name="Qin H."/>
            <person name="Weidman J."/>
            <person name="Tran K."/>
            <person name="Kang K.H."/>
            <person name="Hance I.R."/>
            <person name="Nelson K.E."/>
            <person name="Fraser C.M."/>
        </authorList>
    </citation>
    <scope>NUCLEOTIDE SEQUENCE [LARGE SCALE GENOMIC DNA]</scope>
    <source>
        <strain>ATCC 35984 / DSM 28319 / BCRC 17069 / CCUG 31568 / BM 3577 / RP62A</strain>
    </source>
</reference>
<dbReference type="EC" id="1.1.1.23" evidence="1"/>
<dbReference type="EMBL" id="CP000029">
    <property type="protein sequence ID" value="AAW53202.1"/>
    <property type="molecule type" value="Genomic_DNA"/>
</dbReference>
<dbReference type="RefSeq" id="WP_002470285.1">
    <property type="nucleotide sequence ID" value="NC_002976.3"/>
</dbReference>
<dbReference type="SMR" id="Q5HKN8"/>
<dbReference type="STRING" id="176279.SERP2305"/>
<dbReference type="KEGG" id="ser:SERP2305"/>
<dbReference type="eggNOG" id="COG0141">
    <property type="taxonomic scope" value="Bacteria"/>
</dbReference>
<dbReference type="HOGENOM" id="CLU_006732_3_3_9"/>
<dbReference type="UniPathway" id="UPA00031">
    <property type="reaction ID" value="UER00014"/>
</dbReference>
<dbReference type="Proteomes" id="UP000000531">
    <property type="component" value="Chromosome"/>
</dbReference>
<dbReference type="GO" id="GO:0005829">
    <property type="term" value="C:cytosol"/>
    <property type="evidence" value="ECO:0007669"/>
    <property type="project" value="TreeGrafter"/>
</dbReference>
<dbReference type="GO" id="GO:0004399">
    <property type="term" value="F:histidinol dehydrogenase activity"/>
    <property type="evidence" value="ECO:0007669"/>
    <property type="project" value="UniProtKB-UniRule"/>
</dbReference>
<dbReference type="GO" id="GO:0051287">
    <property type="term" value="F:NAD binding"/>
    <property type="evidence" value="ECO:0007669"/>
    <property type="project" value="InterPro"/>
</dbReference>
<dbReference type="GO" id="GO:0008270">
    <property type="term" value="F:zinc ion binding"/>
    <property type="evidence" value="ECO:0007669"/>
    <property type="project" value="UniProtKB-UniRule"/>
</dbReference>
<dbReference type="GO" id="GO:0000105">
    <property type="term" value="P:L-histidine biosynthetic process"/>
    <property type="evidence" value="ECO:0007669"/>
    <property type="project" value="UniProtKB-UniRule"/>
</dbReference>
<dbReference type="CDD" id="cd06572">
    <property type="entry name" value="Histidinol_dh"/>
    <property type="match status" value="1"/>
</dbReference>
<dbReference type="FunFam" id="3.40.50.1980:FF:000001">
    <property type="entry name" value="Histidinol dehydrogenase"/>
    <property type="match status" value="1"/>
</dbReference>
<dbReference type="FunFam" id="3.40.50.1980:FF:000026">
    <property type="entry name" value="Histidinol dehydrogenase"/>
    <property type="match status" value="1"/>
</dbReference>
<dbReference type="Gene3D" id="1.20.5.1300">
    <property type="match status" value="1"/>
</dbReference>
<dbReference type="Gene3D" id="3.40.50.1980">
    <property type="entry name" value="Nitrogenase molybdenum iron protein domain"/>
    <property type="match status" value="2"/>
</dbReference>
<dbReference type="HAMAP" id="MF_01024">
    <property type="entry name" value="HisD"/>
    <property type="match status" value="1"/>
</dbReference>
<dbReference type="InterPro" id="IPR016161">
    <property type="entry name" value="Ald_DH/histidinol_DH"/>
</dbReference>
<dbReference type="InterPro" id="IPR001692">
    <property type="entry name" value="Histidinol_DH_CS"/>
</dbReference>
<dbReference type="InterPro" id="IPR022695">
    <property type="entry name" value="Histidinol_DH_monofunct"/>
</dbReference>
<dbReference type="InterPro" id="IPR012131">
    <property type="entry name" value="Hstdl_DH"/>
</dbReference>
<dbReference type="NCBIfam" id="TIGR00069">
    <property type="entry name" value="hisD"/>
    <property type="match status" value="1"/>
</dbReference>
<dbReference type="NCBIfam" id="NF010343">
    <property type="entry name" value="PRK13770.1"/>
    <property type="match status" value="1"/>
</dbReference>
<dbReference type="PANTHER" id="PTHR21256:SF2">
    <property type="entry name" value="HISTIDINE BIOSYNTHESIS TRIFUNCTIONAL PROTEIN"/>
    <property type="match status" value="1"/>
</dbReference>
<dbReference type="PANTHER" id="PTHR21256">
    <property type="entry name" value="HISTIDINOL DEHYDROGENASE HDH"/>
    <property type="match status" value="1"/>
</dbReference>
<dbReference type="Pfam" id="PF00815">
    <property type="entry name" value="Histidinol_dh"/>
    <property type="match status" value="1"/>
</dbReference>
<dbReference type="PIRSF" id="PIRSF000099">
    <property type="entry name" value="Histidinol_dh"/>
    <property type="match status" value="1"/>
</dbReference>
<dbReference type="PRINTS" id="PR00083">
    <property type="entry name" value="HOLDHDRGNASE"/>
</dbReference>
<dbReference type="SUPFAM" id="SSF53720">
    <property type="entry name" value="ALDH-like"/>
    <property type="match status" value="1"/>
</dbReference>
<dbReference type="PROSITE" id="PS00611">
    <property type="entry name" value="HISOL_DEHYDROGENASE"/>
    <property type="match status" value="1"/>
</dbReference>
<name>HISX_STAEQ</name>
<evidence type="ECO:0000255" key="1">
    <source>
        <dbReference type="HAMAP-Rule" id="MF_01024"/>
    </source>
</evidence>
<keyword id="KW-0028">Amino-acid biosynthesis</keyword>
<keyword id="KW-0368">Histidine biosynthesis</keyword>
<keyword id="KW-0479">Metal-binding</keyword>
<keyword id="KW-0520">NAD</keyword>
<keyword id="KW-0560">Oxidoreductase</keyword>
<keyword id="KW-1185">Reference proteome</keyword>
<keyword id="KW-0862">Zinc</keyword>
<accession>Q5HKN8</accession>
<protein>
    <recommendedName>
        <fullName evidence="1">Histidinol dehydrogenase</fullName>
        <shortName evidence="1">HDH</shortName>
        <ecNumber evidence="1">1.1.1.23</ecNumber>
    </recommendedName>
</protein>
<feature type="chain" id="PRO_0000135856" description="Histidinol dehydrogenase">
    <location>
        <begin position="1"/>
        <end position="414"/>
    </location>
</feature>
<feature type="active site" description="Proton acceptor" evidence="1">
    <location>
        <position position="313"/>
    </location>
</feature>
<feature type="active site" description="Proton acceptor" evidence="1">
    <location>
        <position position="314"/>
    </location>
</feature>
<feature type="binding site" evidence="1">
    <location>
        <position position="116"/>
    </location>
    <ligand>
        <name>NAD(+)</name>
        <dbReference type="ChEBI" id="CHEBI:57540"/>
    </ligand>
</feature>
<feature type="binding site" evidence="1">
    <location>
        <position position="177"/>
    </location>
    <ligand>
        <name>NAD(+)</name>
        <dbReference type="ChEBI" id="CHEBI:57540"/>
    </ligand>
</feature>
<feature type="binding site" evidence="1">
    <location>
        <position position="200"/>
    </location>
    <ligand>
        <name>NAD(+)</name>
        <dbReference type="ChEBI" id="CHEBI:57540"/>
    </ligand>
</feature>
<feature type="binding site" evidence="1">
    <location>
        <position position="223"/>
    </location>
    <ligand>
        <name>substrate</name>
    </ligand>
</feature>
<feature type="binding site" evidence="1">
    <location>
        <position position="245"/>
    </location>
    <ligand>
        <name>substrate</name>
    </ligand>
</feature>
<feature type="binding site" evidence="1">
    <location>
        <position position="245"/>
    </location>
    <ligand>
        <name>Zn(2+)</name>
        <dbReference type="ChEBI" id="CHEBI:29105"/>
    </ligand>
</feature>
<feature type="binding site" evidence="1">
    <location>
        <position position="248"/>
    </location>
    <ligand>
        <name>substrate</name>
    </ligand>
</feature>
<feature type="binding site" evidence="1">
    <location>
        <position position="248"/>
    </location>
    <ligand>
        <name>Zn(2+)</name>
        <dbReference type="ChEBI" id="CHEBI:29105"/>
    </ligand>
</feature>
<feature type="binding site" evidence="1">
    <location>
        <position position="314"/>
    </location>
    <ligand>
        <name>substrate</name>
    </ligand>
</feature>
<feature type="binding site" evidence="1">
    <location>
        <position position="347"/>
    </location>
    <ligand>
        <name>substrate</name>
    </ligand>
</feature>
<feature type="binding site" evidence="1">
    <location>
        <position position="347"/>
    </location>
    <ligand>
        <name>Zn(2+)</name>
        <dbReference type="ChEBI" id="CHEBI:29105"/>
    </ligand>
</feature>
<feature type="binding site" evidence="1">
    <location>
        <position position="401"/>
    </location>
    <ligand>
        <name>substrate</name>
    </ligand>
</feature>
<feature type="binding site" evidence="1">
    <location>
        <position position="406"/>
    </location>
    <ligand>
        <name>substrate</name>
    </ligand>
</feature>
<feature type="binding site" evidence="1">
    <location>
        <position position="406"/>
    </location>
    <ligand>
        <name>Zn(2+)</name>
        <dbReference type="ChEBI" id="CHEBI:29105"/>
    </ligand>
</feature>
<comment type="function">
    <text evidence="1">Catalyzes the sequential NAD-dependent oxidations of L-histidinol to L-histidinaldehyde and then to L-histidine.</text>
</comment>
<comment type="catalytic activity">
    <reaction evidence="1">
        <text>L-histidinol + 2 NAD(+) + H2O = L-histidine + 2 NADH + 3 H(+)</text>
        <dbReference type="Rhea" id="RHEA:20641"/>
        <dbReference type="ChEBI" id="CHEBI:15377"/>
        <dbReference type="ChEBI" id="CHEBI:15378"/>
        <dbReference type="ChEBI" id="CHEBI:57540"/>
        <dbReference type="ChEBI" id="CHEBI:57595"/>
        <dbReference type="ChEBI" id="CHEBI:57699"/>
        <dbReference type="ChEBI" id="CHEBI:57945"/>
        <dbReference type="EC" id="1.1.1.23"/>
    </reaction>
</comment>
<comment type="cofactor">
    <cofactor evidence="1">
        <name>Zn(2+)</name>
        <dbReference type="ChEBI" id="CHEBI:29105"/>
    </cofactor>
    <text evidence="1">Binds 1 zinc ion per subunit.</text>
</comment>
<comment type="pathway">
    <text evidence="1">Amino-acid biosynthesis; L-histidine biosynthesis; L-histidine from 5-phospho-alpha-D-ribose 1-diphosphate: step 9/9.</text>
</comment>
<comment type="similarity">
    <text evidence="1">Belongs to the histidinol dehydrogenase family.</text>
</comment>
<organism>
    <name type="scientific">Staphylococcus epidermidis (strain ATCC 35984 / DSM 28319 / BCRC 17069 / CCUG 31568 / BM 3577 / RP62A)</name>
    <dbReference type="NCBI Taxonomy" id="176279"/>
    <lineage>
        <taxon>Bacteria</taxon>
        <taxon>Bacillati</taxon>
        <taxon>Bacillota</taxon>
        <taxon>Bacilli</taxon>
        <taxon>Bacillales</taxon>
        <taxon>Staphylococcaceae</taxon>
        <taxon>Staphylococcus</taxon>
    </lineage>
</organism>